<keyword id="KW-0028">Amino-acid biosynthesis</keyword>
<keyword id="KW-0100">Branched-chain amino acid biosynthesis</keyword>
<keyword id="KW-0460">Magnesium</keyword>
<keyword id="KW-0479">Metal-binding</keyword>
<keyword id="KW-0521">NADP</keyword>
<keyword id="KW-0560">Oxidoreductase</keyword>
<proteinExistence type="inferred from homology"/>
<sequence length="338" mass="36211">MKVYYDKDCDLSIIQGKKVAIIGYGSQGHAQACNLKDSGVDVTVGLRKGSATVAKAEAHGLKVTDVASAVAAADLVMILTPDEFQSALYKNEIEPNIKKGATLAFSHGFAIHYNQVVPRADLDVIMIAPKAPGHTVRSEFVKGGGIPDLIAIYQDASGNAKNVALSYAAGVGGGRTGIIETTFKDETETDLFGEQAVLCGGTVELVKAGFETLVEAGYAPEMAYFECLHELKLIVDLMYEGGIANMNYSISNNAEYGEYVTGPEVINAESRQAMRNALKRIQDGEYAKMFISEGATGYPSMTAKRRNNAAHGIEVIGEQLRSMMPWIGANKIVDKAKN</sequence>
<name>ILVC_PSEFS</name>
<feature type="chain" id="PRO_1000206086" description="Ketol-acid reductoisomerase (NADP(+))">
    <location>
        <begin position="1"/>
        <end position="338"/>
    </location>
</feature>
<feature type="domain" description="KARI N-terminal Rossmann" evidence="2">
    <location>
        <begin position="1"/>
        <end position="181"/>
    </location>
</feature>
<feature type="domain" description="KARI C-terminal knotted" evidence="3">
    <location>
        <begin position="182"/>
        <end position="327"/>
    </location>
</feature>
<feature type="active site" evidence="1">
    <location>
        <position position="107"/>
    </location>
</feature>
<feature type="binding site" evidence="1">
    <location>
        <begin position="24"/>
        <end position="27"/>
    </location>
    <ligand>
        <name>NADP(+)</name>
        <dbReference type="ChEBI" id="CHEBI:58349"/>
    </ligand>
</feature>
<feature type="binding site" evidence="1">
    <location>
        <position position="47"/>
    </location>
    <ligand>
        <name>NADP(+)</name>
        <dbReference type="ChEBI" id="CHEBI:58349"/>
    </ligand>
</feature>
<feature type="binding site" evidence="1">
    <location>
        <position position="50"/>
    </location>
    <ligand>
        <name>NADP(+)</name>
        <dbReference type="ChEBI" id="CHEBI:58349"/>
    </ligand>
</feature>
<feature type="binding site" evidence="1">
    <location>
        <position position="52"/>
    </location>
    <ligand>
        <name>NADP(+)</name>
        <dbReference type="ChEBI" id="CHEBI:58349"/>
    </ligand>
</feature>
<feature type="binding site" evidence="1">
    <location>
        <begin position="82"/>
        <end position="85"/>
    </location>
    <ligand>
        <name>NADP(+)</name>
        <dbReference type="ChEBI" id="CHEBI:58349"/>
    </ligand>
</feature>
<feature type="binding site" evidence="1">
    <location>
        <position position="133"/>
    </location>
    <ligand>
        <name>NADP(+)</name>
        <dbReference type="ChEBI" id="CHEBI:58349"/>
    </ligand>
</feature>
<feature type="binding site" evidence="1">
    <location>
        <position position="190"/>
    </location>
    <ligand>
        <name>Mg(2+)</name>
        <dbReference type="ChEBI" id="CHEBI:18420"/>
        <label>1</label>
    </ligand>
</feature>
<feature type="binding site" evidence="1">
    <location>
        <position position="190"/>
    </location>
    <ligand>
        <name>Mg(2+)</name>
        <dbReference type="ChEBI" id="CHEBI:18420"/>
        <label>2</label>
    </ligand>
</feature>
<feature type="binding site" evidence="1">
    <location>
        <position position="194"/>
    </location>
    <ligand>
        <name>Mg(2+)</name>
        <dbReference type="ChEBI" id="CHEBI:18420"/>
        <label>1</label>
    </ligand>
</feature>
<feature type="binding site" evidence="1">
    <location>
        <position position="226"/>
    </location>
    <ligand>
        <name>Mg(2+)</name>
        <dbReference type="ChEBI" id="CHEBI:18420"/>
        <label>2</label>
    </ligand>
</feature>
<feature type="binding site" evidence="1">
    <location>
        <position position="230"/>
    </location>
    <ligand>
        <name>Mg(2+)</name>
        <dbReference type="ChEBI" id="CHEBI:18420"/>
        <label>2</label>
    </ligand>
</feature>
<feature type="binding site" evidence="1">
    <location>
        <position position="251"/>
    </location>
    <ligand>
        <name>substrate</name>
    </ligand>
</feature>
<gene>
    <name evidence="1" type="primary">ilvC</name>
    <name type="ordered locus">PFLU_5218</name>
</gene>
<evidence type="ECO:0000255" key="1">
    <source>
        <dbReference type="HAMAP-Rule" id="MF_00435"/>
    </source>
</evidence>
<evidence type="ECO:0000255" key="2">
    <source>
        <dbReference type="PROSITE-ProRule" id="PRU01197"/>
    </source>
</evidence>
<evidence type="ECO:0000255" key="3">
    <source>
        <dbReference type="PROSITE-ProRule" id="PRU01198"/>
    </source>
</evidence>
<accession>C3K225</accession>
<organism>
    <name type="scientific">Pseudomonas fluorescens (strain SBW25)</name>
    <dbReference type="NCBI Taxonomy" id="216595"/>
    <lineage>
        <taxon>Bacteria</taxon>
        <taxon>Pseudomonadati</taxon>
        <taxon>Pseudomonadota</taxon>
        <taxon>Gammaproteobacteria</taxon>
        <taxon>Pseudomonadales</taxon>
        <taxon>Pseudomonadaceae</taxon>
        <taxon>Pseudomonas</taxon>
    </lineage>
</organism>
<protein>
    <recommendedName>
        <fullName evidence="1">Ketol-acid reductoisomerase (NADP(+))</fullName>
        <shortName evidence="1">KARI</shortName>
        <ecNumber evidence="1">1.1.1.86</ecNumber>
    </recommendedName>
    <alternativeName>
        <fullName evidence="1">Acetohydroxy-acid isomeroreductase</fullName>
        <shortName evidence="1">AHIR</shortName>
    </alternativeName>
    <alternativeName>
        <fullName evidence="1">Alpha-keto-beta-hydroxylacyl reductoisomerase</fullName>
    </alternativeName>
    <alternativeName>
        <fullName evidence="1">Ketol-acid reductoisomerase type 1</fullName>
    </alternativeName>
    <alternativeName>
        <fullName evidence="1">Ketol-acid reductoisomerase type I</fullName>
    </alternativeName>
</protein>
<dbReference type="EC" id="1.1.1.86" evidence="1"/>
<dbReference type="EMBL" id="AM181176">
    <property type="protein sequence ID" value="CAY52297.1"/>
    <property type="molecule type" value="Genomic_DNA"/>
</dbReference>
<dbReference type="RefSeq" id="WP_003176099.1">
    <property type="nucleotide sequence ID" value="NC_012660.1"/>
</dbReference>
<dbReference type="SMR" id="C3K225"/>
<dbReference type="STRING" id="294.SRM1_04832"/>
<dbReference type="GeneID" id="93466848"/>
<dbReference type="eggNOG" id="COG0059">
    <property type="taxonomic scope" value="Bacteria"/>
</dbReference>
<dbReference type="HOGENOM" id="CLU_033821_0_1_6"/>
<dbReference type="OrthoDB" id="9804088at2"/>
<dbReference type="UniPathway" id="UPA00047">
    <property type="reaction ID" value="UER00056"/>
</dbReference>
<dbReference type="UniPathway" id="UPA00049">
    <property type="reaction ID" value="UER00060"/>
</dbReference>
<dbReference type="GO" id="GO:0005829">
    <property type="term" value="C:cytosol"/>
    <property type="evidence" value="ECO:0007669"/>
    <property type="project" value="TreeGrafter"/>
</dbReference>
<dbReference type="GO" id="GO:0004455">
    <property type="term" value="F:ketol-acid reductoisomerase activity"/>
    <property type="evidence" value="ECO:0007669"/>
    <property type="project" value="UniProtKB-UniRule"/>
</dbReference>
<dbReference type="GO" id="GO:0000287">
    <property type="term" value="F:magnesium ion binding"/>
    <property type="evidence" value="ECO:0007669"/>
    <property type="project" value="UniProtKB-UniRule"/>
</dbReference>
<dbReference type="GO" id="GO:0050661">
    <property type="term" value="F:NADP binding"/>
    <property type="evidence" value="ECO:0007669"/>
    <property type="project" value="InterPro"/>
</dbReference>
<dbReference type="GO" id="GO:0009097">
    <property type="term" value="P:isoleucine biosynthetic process"/>
    <property type="evidence" value="ECO:0007669"/>
    <property type="project" value="UniProtKB-UniRule"/>
</dbReference>
<dbReference type="GO" id="GO:0009099">
    <property type="term" value="P:L-valine biosynthetic process"/>
    <property type="evidence" value="ECO:0007669"/>
    <property type="project" value="UniProtKB-UniRule"/>
</dbReference>
<dbReference type="FunFam" id="3.40.50.720:FF:000023">
    <property type="entry name" value="Ketol-acid reductoisomerase (NADP(+))"/>
    <property type="match status" value="1"/>
</dbReference>
<dbReference type="Gene3D" id="6.10.240.10">
    <property type="match status" value="1"/>
</dbReference>
<dbReference type="Gene3D" id="3.40.50.720">
    <property type="entry name" value="NAD(P)-binding Rossmann-like Domain"/>
    <property type="match status" value="1"/>
</dbReference>
<dbReference type="HAMAP" id="MF_00435">
    <property type="entry name" value="IlvC"/>
    <property type="match status" value="1"/>
</dbReference>
<dbReference type="InterPro" id="IPR008927">
    <property type="entry name" value="6-PGluconate_DH-like_C_sf"/>
</dbReference>
<dbReference type="InterPro" id="IPR013023">
    <property type="entry name" value="KARI"/>
</dbReference>
<dbReference type="InterPro" id="IPR000506">
    <property type="entry name" value="KARI_C"/>
</dbReference>
<dbReference type="InterPro" id="IPR013116">
    <property type="entry name" value="KARI_N"/>
</dbReference>
<dbReference type="InterPro" id="IPR014359">
    <property type="entry name" value="KARI_prok"/>
</dbReference>
<dbReference type="InterPro" id="IPR036291">
    <property type="entry name" value="NAD(P)-bd_dom_sf"/>
</dbReference>
<dbReference type="NCBIfam" id="TIGR00465">
    <property type="entry name" value="ilvC"/>
    <property type="match status" value="1"/>
</dbReference>
<dbReference type="NCBIfam" id="NF004017">
    <property type="entry name" value="PRK05479.1"/>
    <property type="match status" value="1"/>
</dbReference>
<dbReference type="NCBIfam" id="NF009940">
    <property type="entry name" value="PRK13403.1"/>
    <property type="match status" value="1"/>
</dbReference>
<dbReference type="PANTHER" id="PTHR21371">
    <property type="entry name" value="KETOL-ACID REDUCTOISOMERASE, MITOCHONDRIAL"/>
    <property type="match status" value="1"/>
</dbReference>
<dbReference type="PANTHER" id="PTHR21371:SF1">
    <property type="entry name" value="KETOL-ACID REDUCTOISOMERASE, MITOCHONDRIAL"/>
    <property type="match status" value="1"/>
</dbReference>
<dbReference type="Pfam" id="PF01450">
    <property type="entry name" value="KARI_C"/>
    <property type="match status" value="1"/>
</dbReference>
<dbReference type="Pfam" id="PF07991">
    <property type="entry name" value="KARI_N"/>
    <property type="match status" value="1"/>
</dbReference>
<dbReference type="PIRSF" id="PIRSF000116">
    <property type="entry name" value="IlvC_gammaproteo"/>
    <property type="match status" value="1"/>
</dbReference>
<dbReference type="SUPFAM" id="SSF48179">
    <property type="entry name" value="6-phosphogluconate dehydrogenase C-terminal domain-like"/>
    <property type="match status" value="1"/>
</dbReference>
<dbReference type="SUPFAM" id="SSF51735">
    <property type="entry name" value="NAD(P)-binding Rossmann-fold domains"/>
    <property type="match status" value="1"/>
</dbReference>
<dbReference type="PROSITE" id="PS51851">
    <property type="entry name" value="KARI_C"/>
    <property type="match status" value="1"/>
</dbReference>
<dbReference type="PROSITE" id="PS51850">
    <property type="entry name" value="KARI_N"/>
    <property type="match status" value="1"/>
</dbReference>
<reference key="1">
    <citation type="journal article" date="2009" name="Genome Biol.">
        <title>Genomic and genetic analyses of diversity and plant interactions of Pseudomonas fluorescens.</title>
        <authorList>
            <person name="Silby M.W."/>
            <person name="Cerdeno-Tarraga A.M."/>
            <person name="Vernikos G.S."/>
            <person name="Giddens S.R."/>
            <person name="Jackson R.W."/>
            <person name="Preston G.M."/>
            <person name="Zhang X.-X."/>
            <person name="Moon C.D."/>
            <person name="Gehrig S.M."/>
            <person name="Godfrey S.A.C."/>
            <person name="Knight C.G."/>
            <person name="Malone J.G."/>
            <person name="Robinson Z."/>
            <person name="Spiers A.J."/>
            <person name="Harris S."/>
            <person name="Challis G.L."/>
            <person name="Yaxley A.M."/>
            <person name="Harris D."/>
            <person name="Seeger K."/>
            <person name="Murphy L."/>
            <person name="Rutter S."/>
            <person name="Squares R."/>
            <person name="Quail M.A."/>
            <person name="Saunders E."/>
            <person name="Mavromatis K."/>
            <person name="Brettin T.S."/>
            <person name="Bentley S.D."/>
            <person name="Hothersall J."/>
            <person name="Stephens E."/>
            <person name="Thomas C.M."/>
            <person name="Parkhill J."/>
            <person name="Levy S.B."/>
            <person name="Rainey P.B."/>
            <person name="Thomson N.R."/>
        </authorList>
    </citation>
    <scope>NUCLEOTIDE SEQUENCE [LARGE SCALE GENOMIC DNA]</scope>
    <source>
        <strain>SBW25</strain>
    </source>
</reference>
<comment type="function">
    <text evidence="1">Involved in the biosynthesis of branched-chain amino acids (BCAA). Catalyzes an alkyl-migration followed by a ketol-acid reduction of (S)-2-acetolactate (S2AL) to yield (R)-2,3-dihydroxy-isovalerate. In the isomerase reaction, S2AL is rearranged via a Mg-dependent methyl migration to produce 3-hydroxy-3-methyl-2-ketobutyrate (HMKB). In the reductase reaction, this 2-ketoacid undergoes a metal-dependent reduction by NADPH to yield (R)-2,3-dihydroxy-isovalerate.</text>
</comment>
<comment type="catalytic activity">
    <reaction evidence="1">
        <text>(2R)-2,3-dihydroxy-3-methylbutanoate + NADP(+) = (2S)-2-acetolactate + NADPH + H(+)</text>
        <dbReference type="Rhea" id="RHEA:22068"/>
        <dbReference type="ChEBI" id="CHEBI:15378"/>
        <dbReference type="ChEBI" id="CHEBI:49072"/>
        <dbReference type="ChEBI" id="CHEBI:57783"/>
        <dbReference type="ChEBI" id="CHEBI:58349"/>
        <dbReference type="ChEBI" id="CHEBI:58476"/>
        <dbReference type="EC" id="1.1.1.86"/>
    </reaction>
</comment>
<comment type="catalytic activity">
    <reaction evidence="1">
        <text>(2R,3R)-2,3-dihydroxy-3-methylpentanoate + NADP(+) = (S)-2-ethyl-2-hydroxy-3-oxobutanoate + NADPH + H(+)</text>
        <dbReference type="Rhea" id="RHEA:13493"/>
        <dbReference type="ChEBI" id="CHEBI:15378"/>
        <dbReference type="ChEBI" id="CHEBI:49256"/>
        <dbReference type="ChEBI" id="CHEBI:49258"/>
        <dbReference type="ChEBI" id="CHEBI:57783"/>
        <dbReference type="ChEBI" id="CHEBI:58349"/>
        <dbReference type="EC" id="1.1.1.86"/>
    </reaction>
</comment>
<comment type="cofactor">
    <cofactor evidence="1">
        <name>Mg(2+)</name>
        <dbReference type="ChEBI" id="CHEBI:18420"/>
    </cofactor>
    <text evidence="1">Binds 2 magnesium ions per subunit.</text>
</comment>
<comment type="pathway">
    <text evidence="1">Amino-acid biosynthesis; L-isoleucine biosynthesis; L-isoleucine from 2-oxobutanoate: step 2/4.</text>
</comment>
<comment type="pathway">
    <text evidence="1">Amino-acid biosynthesis; L-valine biosynthesis; L-valine from pyruvate: step 2/4.</text>
</comment>
<comment type="similarity">
    <text evidence="1">Belongs to the ketol-acid reductoisomerase family.</text>
</comment>